<protein>
    <recommendedName>
        <fullName>Protein FAM72A</fullName>
    </recommendedName>
    <alternativeName>
        <fullName>Dpr4-related protein</fullName>
    </alternativeName>
</protein>
<feature type="chain" id="PRO_0000340261" description="Protein FAM72A">
    <location>
        <begin position="1"/>
        <end position="149"/>
    </location>
</feature>
<accession>A1KXW8</accession>
<keyword id="KW-0963">Cytoplasm</keyword>
<keyword id="KW-0496">Mitochondrion</keyword>
<keyword id="KW-1185">Reference proteome</keyword>
<organism>
    <name type="scientific">Rattus norvegicus</name>
    <name type="common">Rat</name>
    <dbReference type="NCBI Taxonomy" id="10116"/>
    <lineage>
        <taxon>Eukaryota</taxon>
        <taxon>Metazoa</taxon>
        <taxon>Chordata</taxon>
        <taxon>Craniata</taxon>
        <taxon>Vertebrata</taxon>
        <taxon>Euteleostomi</taxon>
        <taxon>Mammalia</taxon>
        <taxon>Eutheria</taxon>
        <taxon>Euarchontoglires</taxon>
        <taxon>Glires</taxon>
        <taxon>Rodentia</taxon>
        <taxon>Myomorpha</taxon>
        <taxon>Muroidea</taxon>
        <taxon>Muridae</taxon>
        <taxon>Murinae</taxon>
        <taxon>Rattus</taxon>
    </lineage>
</organism>
<proteinExistence type="evidence at protein level"/>
<gene>
    <name type="primary">Fam72a</name>
</gene>
<evidence type="ECO:0000250" key="1"/>
<evidence type="ECO:0000305" key="2"/>
<sequence length="149" mass="16756">MSTNNCTFKDRCVSILCCKFCKQVLSSRGMKAVLLADTDIDLYSTDIPPTNTVDFIGRCYFTGIHKCKLKDIACLKCGNIVGYHVIVPCSSCLLSCNNGHFWMFHSQAVYGINRLDSTGVNFLLWGNLPETEECTDEEMLEISAEEYIR</sequence>
<comment type="function">
    <text evidence="1">May play a role in the regulation of cellular reactive oxygen species metabolism. May participate in cell growth regulation (By similarity).</text>
</comment>
<comment type="subunit">
    <text evidence="1">Interacts with UNG.</text>
</comment>
<comment type="subcellular location">
    <subcellularLocation>
        <location evidence="1">Cytoplasm</location>
    </subcellularLocation>
    <subcellularLocation>
        <location evidence="1">Mitochondrion</location>
    </subcellularLocation>
</comment>
<comment type="tissue specificity">
    <text>Expressed at high levels in stomach and also in kidney and, at low levels, in heart (at protein level). In the stomach, highly expressed in foveolar cells, parietal cells and chief cells (at protein level). In kidney, expressed in endothelial cells, mesangial and epithelial cells (parietal and visceral epithelium) around glomerulus (at protein level).</text>
</comment>
<comment type="similarity">
    <text evidence="2">Belongs to the FAM72 family.</text>
</comment>
<dbReference type="EMBL" id="AY513720">
    <property type="protein sequence ID" value="AAS82862.1"/>
    <property type="molecule type" value="mRNA"/>
</dbReference>
<dbReference type="RefSeq" id="NP_001074920.1">
    <property type="nucleotide sequence ID" value="NM_001081451.1"/>
</dbReference>
<dbReference type="FunCoup" id="A1KXW8">
    <property type="interactions" value="20"/>
</dbReference>
<dbReference type="STRING" id="10116.ENSRNOP00000061509"/>
<dbReference type="PhosphoSitePlus" id="A1KXW8"/>
<dbReference type="PaxDb" id="10116-ENSRNOP00000061509"/>
<dbReference type="GeneID" id="681249"/>
<dbReference type="KEGG" id="rno:681249"/>
<dbReference type="UCSC" id="RGD:1598023">
    <property type="organism name" value="rat"/>
</dbReference>
<dbReference type="AGR" id="RGD:1598023"/>
<dbReference type="CTD" id="729533"/>
<dbReference type="RGD" id="1598023">
    <property type="gene designation" value="Fam72a"/>
</dbReference>
<dbReference type="eggNOG" id="ENOG502S1HA">
    <property type="taxonomic scope" value="Eukaryota"/>
</dbReference>
<dbReference type="InParanoid" id="A1KXW8"/>
<dbReference type="OrthoDB" id="2526683at2759"/>
<dbReference type="PhylomeDB" id="A1KXW8"/>
<dbReference type="PRO" id="PR:A1KXW8"/>
<dbReference type="Proteomes" id="UP000002494">
    <property type="component" value="Unplaced"/>
</dbReference>
<dbReference type="GO" id="GO:0005829">
    <property type="term" value="C:cytosol"/>
    <property type="evidence" value="ECO:0000314"/>
    <property type="project" value="MGI"/>
</dbReference>
<dbReference type="GO" id="GO:0016020">
    <property type="term" value="C:membrane"/>
    <property type="evidence" value="ECO:0000314"/>
    <property type="project" value="MGI"/>
</dbReference>
<dbReference type="GO" id="GO:0005739">
    <property type="term" value="C:mitochondrion"/>
    <property type="evidence" value="ECO:0007669"/>
    <property type="project" value="UniProtKB-SubCell"/>
</dbReference>
<dbReference type="GO" id="GO:0043065">
    <property type="term" value="P:positive regulation of apoptotic process"/>
    <property type="evidence" value="ECO:0000314"/>
    <property type="project" value="MGI"/>
</dbReference>
<dbReference type="InterPro" id="IPR026768">
    <property type="entry name" value="YPEH2ZP"/>
</dbReference>
<dbReference type="PANTHER" id="PTHR31841">
    <property type="entry name" value="PROTEIN FAM72A-RELATED"/>
    <property type="match status" value="1"/>
</dbReference>
<dbReference type="PANTHER" id="PTHR31841:SF1">
    <property type="entry name" value="PROTEIN FAM72A-RELATED"/>
    <property type="match status" value="1"/>
</dbReference>
<dbReference type="Pfam" id="PF14976">
    <property type="entry name" value="YPEH2ZP"/>
    <property type="match status" value="1"/>
</dbReference>
<name>FA72A_RAT</name>
<reference key="1">
    <citation type="submission" date="2003-12" db="EMBL/GenBank/DDBJ databases">
        <authorList>
            <person name="Heese K."/>
        </authorList>
    </citation>
    <scope>NUCLEOTIDE SEQUENCE [MRNA]</scope>
</reference>